<evidence type="ECO:0000255" key="1">
    <source>
        <dbReference type="HAMAP-Rule" id="MF_00402"/>
    </source>
</evidence>
<evidence type="ECO:0000305" key="2"/>
<feature type="chain" id="PRO_1000080378" description="Large ribosomal subunit protein bL19">
    <location>
        <begin position="1"/>
        <end position="123"/>
    </location>
</feature>
<reference key="1">
    <citation type="submission" date="2008-02" db="EMBL/GenBank/DDBJ databases">
        <title>Genome sequence of Ureaplasma parvum serovar 3.</title>
        <authorList>
            <person name="Methe B.A."/>
            <person name="Glass J."/>
            <person name="Waites K."/>
            <person name="Shrivastava S."/>
        </authorList>
    </citation>
    <scope>NUCLEOTIDE SEQUENCE [LARGE SCALE GENOMIC DNA]</scope>
    <source>
        <strain>ATCC 27815 / 27 / NCTC 11736</strain>
    </source>
</reference>
<keyword id="KW-0687">Ribonucleoprotein</keyword>
<keyword id="KW-0689">Ribosomal protein</keyword>
<comment type="function">
    <text evidence="1">This protein is located at the 30S-50S ribosomal subunit interface and may play a role in the structure and function of the aminoacyl-tRNA binding site.</text>
</comment>
<comment type="similarity">
    <text evidence="1">Belongs to the bacterial ribosomal protein bL19 family.</text>
</comment>
<dbReference type="EMBL" id="CP000942">
    <property type="protein sequence ID" value="ACA33211.1"/>
    <property type="molecule type" value="Genomic_DNA"/>
</dbReference>
<dbReference type="RefSeq" id="WP_006688591.1">
    <property type="nucleotide sequence ID" value="NC_010503.1"/>
</dbReference>
<dbReference type="SMR" id="B1AJK7"/>
<dbReference type="GeneID" id="29672701"/>
<dbReference type="KEGG" id="upa:UPA3_0605"/>
<dbReference type="HOGENOM" id="CLU_103507_2_2_14"/>
<dbReference type="Proteomes" id="UP000002162">
    <property type="component" value="Chromosome"/>
</dbReference>
<dbReference type="GO" id="GO:0022625">
    <property type="term" value="C:cytosolic large ribosomal subunit"/>
    <property type="evidence" value="ECO:0007669"/>
    <property type="project" value="TreeGrafter"/>
</dbReference>
<dbReference type="GO" id="GO:0003735">
    <property type="term" value="F:structural constituent of ribosome"/>
    <property type="evidence" value="ECO:0007669"/>
    <property type="project" value="InterPro"/>
</dbReference>
<dbReference type="GO" id="GO:0006412">
    <property type="term" value="P:translation"/>
    <property type="evidence" value="ECO:0007669"/>
    <property type="project" value="UniProtKB-UniRule"/>
</dbReference>
<dbReference type="Gene3D" id="2.30.30.790">
    <property type="match status" value="1"/>
</dbReference>
<dbReference type="HAMAP" id="MF_00402">
    <property type="entry name" value="Ribosomal_bL19"/>
    <property type="match status" value="1"/>
</dbReference>
<dbReference type="InterPro" id="IPR001857">
    <property type="entry name" value="Ribosomal_bL19"/>
</dbReference>
<dbReference type="InterPro" id="IPR018257">
    <property type="entry name" value="Ribosomal_bL19_CS"/>
</dbReference>
<dbReference type="InterPro" id="IPR038657">
    <property type="entry name" value="Ribosomal_bL19_sf"/>
</dbReference>
<dbReference type="InterPro" id="IPR008991">
    <property type="entry name" value="Translation_prot_SH3-like_sf"/>
</dbReference>
<dbReference type="NCBIfam" id="TIGR01024">
    <property type="entry name" value="rplS_bact"/>
    <property type="match status" value="1"/>
</dbReference>
<dbReference type="PANTHER" id="PTHR15680:SF9">
    <property type="entry name" value="LARGE RIBOSOMAL SUBUNIT PROTEIN BL19M"/>
    <property type="match status" value="1"/>
</dbReference>
<dbReference type="PANTHER" id="PTHR15680">
    <property type="entry name" value="RIBOSOMAL PROTEIN L19"/>
    <property type="match status" value="1"/>
</dbReference>
<dbReference type="Pfam" id="PF01245">
    <property type="entry name" value="Ribosomal_L19"/>
    <property type="match status" value="1"/>
</dbReference>
<dbReference type="PIRSF" id="PIRSF002191">
    <property type="entry name" value="Ribosomal_L19"/>
    <property type="match status" value="1"/>
</dbReference>
<dbReference type="PRINTS" id="PR00061">
    <property type="entry name" value="RIBOSOMALL19"/>
</dbReference>
<dbReference type="SUPFAM" id="SSF50104">
    <property type="entry name" value="Translation proteins SH3-like domain"/>
    <property type="match status" value="1"/>
</dbReference>
<dbReference type="PROSITE" id="PS01015">
    <property type="entry name" value="RIBOSOMAL_L19"/>
    <property type="match status" value="1"/>
</dbReference>
<organism>
    <name type="scientific">Ureaplasma parvum serovar 3 (strain ATCC 27815 / 27 / NCTC 11736)</name>
    <dbReference type="NCBI Taxonomy" id="505682"/>
    <lineage>
        <taxon>Bacteria</taxon>
        <taxon>Bacillati</taxon>
        <taxon>Mycoplasmatota</taxon>
        <taxon>Mycoplasmoidales</taxon>
        <taxon>Mycoplasmoidaceae</taxon>
        <taxon>Ureaplasma</taxon>
    </lineage>
</organism>
<protein>
    <recommendedName>
        <fullName evidence="1">Large ribosomal subunit protein bL19</fullName>
    </recommendedName>
    <alternativeName>
        <fullName evidence="2">50S ribosomal protein L19</fullName>
    </alternativeName>
</protein>
<name>RL19_UREP2</name>
<gene>
    <name evidence="1" type="primary">rplS</name>
    <name type="ordered locus">UPA3_0605</name>
</gene>
<sequence>MALFKINKGEIMNFVNSTQLKTDIPNFDSGDTIIVHNRIVEGKKSRIQKFEGVVLRRRGSGSSETVIVRKESSGIGVEQSFNIHSPLVEKIEVIKYGKVRRAYISYMRNRSGKSARIKELNKQ</sequence>
<proteinExistence type="inferred from homology"/>
<accession>B1AJK7</accession>